<keyword id="KW-0175">Coiled coil</keyword>
<keyword id="KW-0677">Repeat</keyword>
<accession>Q26519</accession>
<proteinExistence type="evidence at transcript level"/>
<sequence length="284" mass="33025">MDGIKKKMIAMKLEKENAMERAVQYEELLKKKEEEREKRENEISELNTKMKQAQIDCDEVQETLQEQMNKLEETEKRATNAEAQVAAMTRRIRLLEEDLEVSSSRLTETLTKLEEASKTAEESERGRKDLEIRSIADDERLNQLEDQQKEAKYIAEDADRKYDEAARKLAIAEVDFERAEARLEAAESKIVELEEELRVVGNNMKALEISEQESAQREESYEETIRDLTERLKAAEQRATEAERQVSKLQNEVDHLEDDLLAEKERYKALSGELDQTFAELTGY</sequence>
<protein>
    <recommendedName>
        <fullName>Tropomyosin</fullName>
    </recommendedName>
</protein>
<comment type="function">
    <text>Tropomyosin, in association with the troponin complex, plays a central role in the calcium dependent regulation of muscle contraction.</text>
</comment>
<comment type="subunit">
    <text evidence="1">Homodimer.</text>
</comment>
<comment type="domain">
    <text>The molecule is in a coiled coil structure that is formed by 2 polypeptide chains. The sequence exhibits a prominent seven-residues periodicity.</text>
</comment>
<comment type="similarity">
    <text evidence="3">Belongs to the tropomyosin family.</text>
</comment>
<feature type="chain" id="PRO_0000205655" description="Tropomyosin">
    <location>
        <begin position="1"/>
        <end position="284"/>
    </location>
</feature>
<feature type="region of interest" description="Disordered" evidence="2">
    <location>
        <begin position="111"/>
        <end position="131"/>
    </location>
</feature>
<feature type="coiled-coil region">
    <location>
        <begin position="1"/>
        <end position="284"/>
    </location>
</feature>
<organism>
    <name type="scientific">Schistosoma japonicum</name>
    <name type="common">Blood fluke</name>
    <dbReference type="NCBI Taxonomy" id="6182"/>
    <lineage>
        <taxon>Eukaryota</taxon>
        <taxon>Metazoa</taxon>
        <taxon>Spiralia</taxon>
        <taxon>Lophotrochozoa</taxon>
        <taxon>Platyhelminthes</taxon>
        <taxon>Trematoda</taxon>
        <taxon>Digenea</taxon>
        <taxon>Strigeidida</taxon>
        <taxon>Schistosomatoidea</taxon>
        <taxon>Schistosomatidae</taxon>
        <taxon>Schistosoma</taxon>
    </lineage>
</organism>
<reference key="1">
    <citation type="submission" date="1996-02" db="EMBL/GenBank/DDBJ databases">
        <title>Comparison of the amino acid sequences for Schistosoma haematobium tropomyosin and S. japonicum tropomyosin with that of S. mansoni tropomyosin.</title>
        <authorList>
            <person name="Nicholson L.J."/>
            <person name="Karim A.M."/>
            <person name="Loverde P.T."/>
        </authorList>
    </citation>
    <scope>NUCLEOTIDE SEQUENCE [MRNA]</scope>
</reference>
<dbReference type="EMBL" id="L76203">
    <property type="protein sequence ID" value="AAA88531.1"/>
    <property type="molecule type" value="mRNA"/>
</dbReference>
<dbReference type="SMR" id="Q26519"/>
<dbReference type="FunFam" id="1.20.5.170:FF:000001">
    <property type="entry name" value="Tropomyosin alpha-1 chain isoform 1"/>
    <property type="match status" value="1"/>
</dbReference>
<dbReference type="FunFam" id="1.20.5.340:FF:000001">
    <property type="entry name" value="Tropomyosin alpha-1 chain isoform 2"/>
    <property type="match status" value="1"/>
</dbReference>
<dbReference type="Gene3D" id="1.20.5.170">
    <property type="match status" value="2"/>
</dbReference>
<dbReference type="Gene3D" id="1.20.5.340">
    <property type="match status" value="1"/>
</dbReference>
<dbReference type="InterPro" id="IPR000533">
    <property type="entry name" value="Tropomyosin"/>
</dbReference>
<dbReference type="PANTHER" id="PTHR19269">
    <property type="entry name" value="TROPOMYOSIN"/>
    <property type="match status" value="1"/>
</dbReference>
<dbReference type="Pfam" id="PF00261">
    <property type="entry name" value="Tropomyosin"/>
    <property type="match status" value="1"/>
</dbReference>
<dbReference type="PRINTS" id="PR00194">
    <property type="entry name" value="TROPOMYOSIN"/>
</dbReference>
<dbReference type="SUPFAM" id="SSF57997">
    <property type="entry name" value="Tropomyosin"/>
    <property type="match status" value="1"/>
</dbReference>
<dbReference type="PROSITE" id="PS00326">
    <property type="entry name" value="TROPOMYOSIN"/>
    <property type="match status" value="1"/>
</dbReference>
<evidence type="ECO:0000250" key="1"/>
<evidence type="ECO:0000256" key="2">
    <source>
        <dbReference type="SAM" id="MobiDB-lite"/>
    </source>
</evidence>
<evidence type="ECO:0000305" key="3"/>
<name>TPM_SCHJA</name>